<evidence type="ECO:0000255" key="1">
    <source>
        <dbReference type="HAMAP-Rule" id="MF_00032"/>
    </source>
</evidence>
<dbReference type="EMBL" id="BA000001">
    <property type="protein sequence ID" value="BAA29617.1"/>
    <property type="molecule type" value="Genomic_DNA"/>
</dbReference>
<dbReference type="PIR" id="D71166">
    <property type="entry name" value="D71166"/>
</dbReference>
<dbReference type="RefSeq" id="WP_010884629.1">
    <property type="nucleotide sequence ID" value="NC_000961.1"/>
</dbReference>
<dbReference type="SMR" id="O58264"/>
<dbReference type="STRING" id="70601.gene:9377463"/>
<dbReference type="EnsemblBacteria" id="BAA29617">
    <property type="protein sequence ID" value="BAA29617"/>
    <property type="gene ID" value="BAA29617"/>
</dbReference>
<dbReference type="GeneID" id="1444416"/>
<dbReference type="KEGG" id="pho:PH0528"/>
<dbReference type="eggNOG" id="arCOG04176">
    <property type="taxonomic scope" value="Archaea"/>
</dbReference>
<dbReference type="OrthoDB" id="33582at2157"/>
<dbReference type="Proteomes" id="UP000000752">
    <property type="component" value="Chromosome"/>
</dbReference>
<dbReference type="GO" id="GO:0043022">
    <property type="term" value="F:ribosome binding"/>
    <property type="evidence" value="ECO:0007669"/>
    <property type="project" value="InterPro"/>
</dbReference>
<dbReference type="GO" id="GO:0003743">
    <property type="term" value="F:translation initiation factor activity"/>
    <property type="evidence" value="ECO:0007669"/>
    <property type="project" value="UniProtKB-UniRule"/>
</dbReference>
<dbReference type="GO" id="GO:0042256">
    <property type="term" value="P:cytosolic ribosome assembly"/>
    <property type="evidence" value="ECO:0007669"/>
    <property type="project" value="InterPro"/>
</dbReference>
<dbReference type="CDD" id="cd00527">
    <property type="entry name" value="IF6"/>
    <property type="match status" value="1"/>
</dbReference>
<dbReference type="Gene3D" id="3.75.10.10">
    <property type="entry name" value="L-arginine/glycine Amidinotransferase, Chain A"/>
    <property type="match status" value="1"/>
</dbReference>
<dbReference type="HAMAP" id="MF_00032">
    <property type="entry name" value="eIF_6"/>
    <property type="match status" value="1"/>
</dbReference>
<dbReference type="InterPro" id="IPR002769">
    <property type="entry name" value="eIF6"/>
</dbReference>
<dbReference type="NCBIfam" id="TIGR00323">
    <property type="entry name" value="eIF-6"/>
    <property type="match status" value="1"/>
</dbReference>
<dbReference type="NCBIfam" id="NF003129">
    <property type="entry name" value="PRK04046.1-5"/>
    <property type="match status" value="1"/>
</dbReference>
<dbReference type="PANTHER" id="PTHR10784">
    <property type="entry name" value="TRANSLATION INITIATION FACTOR 6"/>
    <property type="match status" value="1"/>
</dbReference>
<dbReference type="Pfam" id="PF01912">
    <property type="entry name" value="eIF-6"/>
    <property type="match status" value="1"/>
</dbReference>
<dbReference type="PIRSF" id="PIRSF006413">
    <property type="entry name" value="IF-6"/>
    <property type="match status" value="1"/>
</dbReference>
<dbReference type="SMART" id="SM00654">
    <property type="entry name" value="eIF6"/>
    <property type="match status" value="1"/>
</dbReference>
<dbReference type="SUPFAM" id="SSF55909">
    <property type="entry name" value="Pentein"/>
    <property type="match status" value="1"/>
</dbReference>
<sequence>MHIERLDFENSPYLGVFGVATDRVVLIREGLQEKKLEVIRETLKVPVIEVSVMKSRIIGTLATGNSNAIILPWYVWDAEIERIKKALSEYGIDMEVVPFRSKYTALGNLILTNDKAALVSAKFSRKEAQEIGEILGVEVERGVIAGLHAVGSAGVVTNKGGLVHPETSDEELEWLSDLFKVDVYVGTANMGVPYVGTCMLANSNGVVVGHLTTGPEIVKIEEALGFV</sequence>
<protein>
    <recommendedName>
        <fullName evidence="1">Translation initiation factor 6</fullName>
        <shortName evidence="1">aIF-6</shortName>
    </recommendedName>
</protein>
<name>IF6_PYRHO</name>
<gene>
    <name evidence="1" type="primary">eif6</name>
    <name type="ordered locus">PH0528</name>
    <name type="ORF">PHBG043</name>
</gene>
<proteinExistence type="inferred from homology"/>
<keyword id="KW-0396">Initiation factor</keyword>
<keyword id="KW-0648">Protein biosynthesis</keyword>
<comment type="function">
    <text evidence="1">Binds to the 50S ribosomal subunit and prevents its association with the 30S ribosomal subunit to form the 70S initiation complex.</text>
</comment>
<comment type="similarity">
    <text evidence="1">Belongs to the eIF-6 family.</text>
</comment>
<feature type="chain" id="PRO_0000153756" description="Translation initiation factor 6">
    <location>
        <begin position="1"/>
        <end position="227"/>
    </location>
</feature>
<reference key="1">
    <citation type="journal article" date="1998" name="DNA Res.">
        <title>Complete sequence and gene organization of the genome of a hyper-thermophilic archaebacterium, Pyrococcus horikoshii OT3.</title>
        <authorList>
            <person name="Kawarabayasi Y."/>
            <person name="Sawada M."/>
            <person name="Horikawa H."/>
            <person name="Haikawa Y."/>
            <person name="Hino Y."/>
            <person name="Yamamoto S."/>
            <person name="Sekine M."/>
            <person name="Baba S."/>
            <person name="Kosugi H."/>
            <person name="Hosoyama A."/>
            <person name="Nagai Y."/>
            <person name="Sakai M."/>
            <person name="Ogura K."/>
            <person name="Otsuka R."/>
            <person name="Nakazawa H."/>
            <person name="Takamiya M."/>
            <person name="Ohfuku Y."/>
            <person name="Funahashi T."/>
            <person name="Tanaka T."/>
            <person name="Kudoh Y."/>
            <person name="Yamazaki J."/>
            <person name="Kushida N."/>
            <person name="Oguchi A."/>
            <person name="Aoki K."/>
            <person name="Yoshizawa T."/>
            <person name="Nakamura Y."/>
            <person name="Robb F.T."/>
            <person name="Horikoshi K."/>
            <person name="Masuchi Y."/>
            <person name="Shizuya H."/>
            <person name="Kikuchi H."/>
        </authorList>
    </citation>
    <scope>NUCLEOTIDE SEQUENCE [LARGE SCALE GENOMIC DNA]</scope>
    <source>
        <strain>ATCC 700860 / DSM 12428 / JCM 9974 / NBRC 100139 / OT-3</strain>
    </source>
</reference>
<organism>
    <name type="scientific">Pyrococcus horikoshii (strain ATCC 700860 / DSM 12428 / JCM 9974 / NBRC 100139 / OT-3)</name>
    <dbReference type="NCBI Taxonomy" id="70601"/>
    <lineage>
        <taxon>Archaea</taxon>
        <taxon>Methanobacteriati</taxon>
        <taxon>Methanobacteriota</taxon>
        <taxon>Thermococci</taxon>
        <taxon>Thermococcales</taxon>
        <taxon>Thermococcaceae</taxon>
        <taxon>Pyrococcus</taxon>
    </lineage>
</organism>
<accession>O58264</accession>